<proteinExistence type="inferred from homology"/>
<reference key="1">
    <citation type="journal article" date="2003" name="Nature">
        <title>The genome of a motile marine Synechococcus.</title>
        <authorList>
            <person name="Palenik B."/>
            <person name="Brahamsha B."/>
            <person name="Larimer F.W."/>
            <person name="Land M.L."/>
            <person name="Hauser L."/>
            <person name="Chain P."/>
            <person name="Lamerdin J.E."/>
            <person name="Regala W."/>
            <person name="Allen E.E."/>
            <person name="McCarren J."/>
            <person name="Paulsen I.T."/>
            <person name="Dufresne A."/>
            <person name="Partensky F."/>
            <person name="Webb E.A."/>
            <person name="Waterbury J."/>
        </authorList>
    </citation>
    <scope>NUCLEOTIDE SEQUENCE [LARGE SCALE GENOMIC DNA]</scope>
    <source>
        <strain>WH8102</strain>
    </source>
</reference>
<evidence type="ECO:0000255" key="1">
    <source>
        <dbReference type="HAMAP-Rule" id="MF_00443"/>
    </source>
</evidence>
<organism>
    <name type="scientific">Parasynechococcus marenigrum (strain WH8102)</name>
    <dbReference type="NCBI Taxonomy" id="84588"/>
    <lineage>
        <taxon>Bacteria</taxon>
        <taxon>Bacillati</taxon>
        <taxon>Cyanobacteriota</taxon>
        <taxon>Cyanophyceae</taxon>
        <taxon>Synechococcales</taxon>
        <taxon>Prochlorococcaceae</taxon>
        <taxon>Parasynechococcus</taxon>
        <taxon>Parasynechococcus marenigrum</taxon>
    </lineage>
</organism>
<name>THIG_PARMW</name>
<feature type="chain" id="PRO_0000162866" description="Thiazole synthase">
    <location>
        <begin position="1"/>
        <end position="274"/>
    </location>
</feature>
<feature type="active site" description="Schiff-base intermediate with DXP" evidence="1">
    <location>
        <position position="115"/>
    </location>
</feature>
<feature type="binding site" evidence="1">
    <location>
        <position position="176"/>
    </location>
    <ligand>
        <name>1-deoxy-D-xylulose 5-phosphate</name>
        <dbReference type="ChEBI" id="CHEBI:57792"/>
    </ligand>
</feature>
<feature type="binding site" evidence="1">
    <location>
        <begin position="202"/>
        <end position="203"/>
    </location>
    <ligand>
        <name>1-deoxy-D-xylulose 5-phosphate</name>
        <dbReference type="ChEBI" id="CHEBI:57792"/>
    </ligand>
</feature>
<feature type="binding site" evidence="1">
    <location>
        <begin position="224"/>
        <end position="225"/>
    </location>
    <ligand>
        <name>1-deoxy-D-xylulose 5-phosphate</name>
        <dbReference type="ChEBI" id="CHEBI:57792"/>
    </ligand>
</feature>
<comment type="function">
    <text evidence="1">Catalyzes the rearrangement of 1-deoxy-D-xylulose 5-phosphate (DXP) to produce the thiazole phosphate moiety of thiamine. Sulfur is provided by the thiocarboxylate moiety of the carrier protein ThiS. In vitro, sulfur can be provided by H(2)S.</text>
</comment>
<comment type="catalytic activity">
    <reaction evidence="1">
        <text>[ThiS sulfur-carrier protein]-C-terminal-Gly-aminoethanethioate + 2-iminoacetate + 1-deoxy-D-xylulose 5-phosphate = [ThiS sulfur-carrier protein]-C-terminal Gly-Gly + 2-[(2R,5Z)-2-carboxy-4-methylthiazol-5(2H)-ylidene]ethyl phosphate + 2 H2O + H(+)</text>
        <dbReference type="Rhea" id="RHEA:26297"/>
        <dbReference type="Rhea" id="RHEA-COMP:12909"/>
        <dbReference type="Rhea" id="RHEA-COMP:19908"/>
        <dbReference type="ChEBI" id="CHEBI:15377"/>
        <dbReference type="ChEBI" id="CHEBI:15378"/>
        <dbReference type="ChEBI" id="CHEBI:57792"/>
        <dbReference type="ChEBI" id="CHEBI:62899"/>
        <dbReference type="ChEBI" id="CHEBI:77846"/>
        <dbReference type="ChEBI" id="CHEBI:90778"/>
        <dbReference type="ChEBI" id="CHEBI:232372"/>
        <dbReference type="EC" id="2.8.1.10"/>
    </reaction>
</comment>
<comment type="pathway">
    <text evidence="1">Cofactor biosynthesis; thiamine diphosphate biosynthesis.</text>
</comment>
<comment type="subunit">
    <text evidence="1">Homotetramer. Forms heterodimers with either ThiH or ThiS.</text>
</comment>
<comment type="subcellular location">
    <subcellularLocation>
        <location evidence="1">Cytoplasm</location>
    </subcellularLocation>
</comment>
<comment type="similarity">
    <text evidence="1">Belongs to the ThiG family.</text>
</comment>
<sequence length="274" mass="28536">MVPNPPISLAQGDDLIIGGRRFHSRLFTGTGKYPSMEVMQQSIKRSACEMVTVAVRRVQAVAAGHAGLMEAIDWTRIWMLPNTAGCTNAEEAVRVARLGRELAKLAGQEDNTFVKLEVIPDGRHLLPDPIGTLQAAEQLVNEGFTVLPYINADPLLAKHLEDAGCATVMPLGSPIGSGQGLNNAANIALIIENASVPVVVDAGIGVPSEAAQALEMGADAVLVNSAIALARNPAAMAEAMGQAVIAGRTAFCAGRLPRREEASASSPTTGLVSS</sequence>
<keyword id="KW-0963">Cytoplasm</keyword>
<keyword id="KW-0704">Schiff base</keyword>
<keyword id="KW-0784">Thiamine biosynthesis</keyword>
<keyword id="KW-0808">Transferase</keyword>
<accession>Q7UA46</accession>
<protein>
    <recommendedName>
        <fullName evidence="1">Thiazole synthase</fullName>
        <ecNumber evidence="1">2.8.1.10</ecNumber>
    </recommendedName>
</protein>
<gene>
    <name evidence="1" type="primary">thiG</name>
    <name type="ordered locus">SYNW0054</name>
</gene>
<dbReference type="EC" id="2.8.1.10" evidence="1"/>
<dbReference type="EMBL" id="BX569689">
    <property type="protein sequence ID" value="CAE06569.1"/>
    <property type="molecule type" value="Genomic_DNA"/>
</dbReference>
<dbReference type="RefSeq" id="WP_011126932.1">
    <property type="nucleotide sequence ID" value="NC_005070.1"/>
</dbReference>
<dbReference type="SMR" id="Q7UA46"/>
<dbReference type="STRING" id="84588.SYNW0054"/>
<dbReference type="KEGG" id="syw:SYNW0054"/>
<dbReference type="eggNOG" id="COG2022">
    <property type="taxonomic scope" value="Bacteria"/>
</dbReference>
<dbReference type="HOGENOM" id="CLU_062233_1_0_3"/>
<dbReference type="UniPathway" id="UPA00060"/>
<dbReference type="Proteomes" id="UP000001422">
    <property type="component" value="Chromosome"/>
</dbReference>
<dbReference type="GO" id="GO:0005737">
    <property type="term" value="C:cytoplasm"/>
    <property type="evidence" value="ECO:0007669"/>
    <property type="project" value="UniProtKB-SubCell"/>
</dbReference>
<dbReference type="GO" id="GO:1990107">
    <property type="term" value="F:thiazole synthase activity"/>
    <property type="evidence" value="ECO:0007669"/>
    <property type="project" value="UniProtKB-EC"/>
</dbReference>
<dbReference type="GO" id="GO:0009229">
    <property type="term" value="P:thiamine diphosphate biosynthetic process"/>
    <property type="evidence" value="ECO:0007669"/>
    <property type="project" value="UniProtKB-UniRule"/>
</dbReference>
<dbReference type="CDD" id="cd04728">
    <property type="entry name" value="ThiG"/>
    <property type="match status" value="1"/>
</dbReference>
<dbReference type="Gene3D" id="3.20.20.70">
    <property type="entry name" value="Aldolase class I"/>
    <property type="match status" value="1"/>
</dbReference>
<dbReference type="HAMAP" id="MF_00443">
    <property type="entry name" value="ThiG"/>
    <property type="match status" value="1"/>
</dbReference>
<dbReference type="InterPro" id="IPR013785">
    <property type="entry name" value="Aldolase_TIM"/>
</dbReference>
<dbReference type="InterPro" id="IPR033983">
    <property type="entry name" value="Thiazole_synthase_ThiG"/>
</dbReference>
<dbReference type="InterPro" id="IPR008867">
    <property type="entry name" value="ThiG"/>
</dbReference>
<dbReference type="PANTHER" id="PTHR34266">
    <property type="entry name" value="THIAZOLE SYNTHASE"/>
    <property type="match status" value="1"/>
</dbReference>
<dbReference type="PANTHER" id="PTHR34266:SF2">
    <property type="entry name" value="THIAZOLE SYNTHASE"/>
    <property type="match status" value="1"/>
</dbReference>
<dbReference type="Pfam" id="PF05690">
    <property type="entry name" value="ThiG"/>
    <property type="match status" value="1"/>
</dbReference>
<dbReference type="SUPFAM" id="SSF110399">
    <property type="entry name" value="ThiG-like"/>
    <property type="match status" value="1"/>
</dbReference>